<name>MES16_ARATH</name>
<comment type="function">
    <text evidence="2 3 4 5 6">Involved in the chlorophyll breakdown by its action in fluorescent chlorophyll catabolites (FCCs) demethylation (PubMed:22147518, PubMed:23723324, PubMed:24302623). Demethylates the C13(2)-carboxymethyl group present at the isocyclic ring of chlorophyll (PubMed:22147518). Uses primary fluorescent dioxobilin-type chlorophyll catabolite (pFDCC) as substrate to produce O13(4)-desmethyl pFDCC (PubMed:23723324, PubMed:24302623). Also able to catalyze pheophorbides in vitro (PubMed:22147518). Methylesterase shown to have carboxylesterase activity, methyl indole-3-acetic acid (MeIAA) esterase activity and methyl jasmonate (MeJA) esterase activity in vitro (PubMed:18467465, PubMed:27109476).</text>
</comment>
<comment type="catalytic activity">
    <reaction evidence="2">
        <text>methyl (indol-3-yl)acetate + H2O = (indol-3-yl)acetate + methanol + H(+)</text>
        <dbReference type="Rhea" id="RHEA:32919"/>
        <dbReference type="ChEBI" id="CHEBI:15377"/>
        <dbReference type="ChEBI" id="CHEBI:15378"/>
        <dbReference type="ChEBI" id="CHEBI:17790"/>
        <dbReference type="ChEBI" id="CHEBI:30854"/>
        <dbReference type="ChEBI" id="CHEBI:72782"/>
    </reaction>
    <physiologicalReaction direction="left-to-right" evidence="2">
        <dbReference type="Rhea" id="RHEA:32920"/>
    </physiologicalReaction>
</comment>
<comment type="catalytic activity">
    <reaction evidence="2">
        <text>methyl (-)-jasmonate + H2O = jasmonate + methanol + H(+)</text>
        <dbReference type="Rhea" id="RHEA:55372"/>
        <dbReference type="ChEBI" id="CHEBI:15377"/>
        <dbReference type="ChEBI" id="CHEBI:15378"/>
        <dbReference type="ChEBI" id="CHEBI:15929"/>
        <dbReference type="ChEBI" id="CHEBI:17790"/>
        <dbReference type="ChEBI" id="CHEBI:58431"/>
    </reaction>
    <physiologicalReaction direction="left-to-right" evidence="2">
        <dbReference type="Rhea" id="RHEA:55373"/>
    </physiologicalReaction>
</comment>
<comment type="catalytic activity">
    <reaction evidence="4">
        <text>primary fluorescent dioxobilin-type chlorophyll catabolite + H2O = O13(4)-desmethyl pFDCC + methanol + H(+)</text>
        <dbReference type="Rhea" id="RHEA:67176"/>
        <dbReference type="ChEBI" id="CHEBI:15377"/>
        <dbReference type="ChEBI" id="CHEBI:15378"/>
        <dbReference type="ChEBI" id="CHEBI:17790"/>
        <dbReference type="ChEBI" id="CHEBI:167885"/>
        <dbReference type="ChEBI" id="CHEBI:167889"/>
    </reaction>
    <physiologicalReaction direction="left-to-right" evidence="4">
        <dbReference type="Rhea" id="RHEA:67177"/>
    </physiologicalReaction>
</comment>
<comment type="pathway">
    <text evidence="2">Plant hormone biosynthesis.</text>
</comment>
<comment type="pathway">
    <text evidence="2">Lipid metabolism; oxylipin biosynthesis.</text>
</comment>
<comment type="pathway">
    <text evidence="3 4">Porphyrin-containing compound metabolism; chlorophyll degradation.</text>
</comment>
<comment type="subcellular location">
    <subcellularLocation>
        <location evidence="3">Cytoplasm</location>
    </subcellularLocation>
</comment>
<comment type="disruption phenotype">
    <text evidence="2 3 5">Accumulation of fluorescent chlorophyll catabolites (FCC) during senescence (PubMed:24302623). No effect on root length when grown in presence of exogenous MeIAA.</text>
</comment>
<comment type="similarity">
    <text evidence="11">Belongs to the AB hydrolase superfamily. Methylesterase family.</text>
</comment>
<protein>
    <recommendedName>
        <fullName evidence="10">pFDCC methylesterase MES16</fullName>
        <ecNumber evidence="4">3.1.1.-</ecNumber>
    </recommendedName>
    <alternativeName>
        <fullName evidence="8 9">Methylesterase 16</fullName>
        <shortName evidence="8 9">AtMES16</shortName>
    </alternativeName>
    <alternativeName>
        <fullName evidence="7">Pheophorbidase</fullName>
        <shortName evidence="7">AtPPD</shortName>
    </alternativeName>
</protein>
<feature type="chain" id="PRO_0000391349" description="pFDCC methylesterase MES16">
    <location>
        <begin position="1"/>
        <end position="262"/>
    </location>
</feature>
<feature type="active site" description="Acyl-ester intermediate" evidence="6">
    <location>
        <position position="87"/>
    </location>
</feature>
<feature type="active site" description="Charge relay system" evidence="1">
    <location>
        <position position="211"/>
    </location>
</feature>
<feature type="active site" description="Charge relay system" evidence="1">
    <location>
        <position position="239"/>
    </location>
</feature>
<feature type="mutagenesis site" description="No esterase activity on methyl indole-3-acetic acid (MeIAA)." evidence="6">
    <original>S</original>
    <variation>A</variation>
    <location>
        <position position="87"/>
    </location>
</feature>
<feature type="strand" evidence="15">
    <location>
        <begin position="12"/>
        <end position="16"/>
    </location>
</feature>
<feature type="helix" evidence="15">
    <location>
        <begin position="23"/>
        <end position="26"/>
    </location>
</feature>
<feature type="helix" evidence="15">
    <location>
        <begin position="27"/>
        <end position="35"/>
    </location>
</feature>
<feature type="strand" evidence="15">
    <location>
        <begin position="39"/>
        <end position="42"/>
    </location>
</feature>
<feature type="helix" evidence="15">
    <location>
        <begin position="55"/>
        <end position="57"/>
    </location>
</feature>
<feature type="helix" evidence="15">
    <location>
        <begin position="61"/>
        <end position="64"/>
    </location>
</feature>
<feature type="helix" evidence="15">
    <location>
        <begin position="66"/>
        <end position="73"/>
    </location>
</feature>
<feature type="strand" evidence="15">
    <location>
        <begin position="81"/>
        <end position="86"/>
    </location>
</feature>
<feature type="helix" evidence="15">
    <location>
        <begin position="89"/>
        <end position="99"/>
    </location>
</feature>
<feature type="helix" evidence="15">
    <location>
        <begin position="101"/>
        <end position="103"/>
    </location>
</feature>
<feature type="strand" evidence="15">
    <location>
        <begin position="104"/>
        <end position="111"/>
    </location>
</feature>
<feature type="strand" evidence="15">
    <location>
        <begin position="136"/>
        <end position="139"/>
    </location>
</feature>
<feature type="strand" evidence="15">
    <location>
        <begin position="149"/>
        <end position="153"/>
    </location>
</feature>
<feature type="helix" evidence="15">
    <location>
        <begin position="155"/>
        <end position="157"/>
    </location>
</feature>
<feature type="helix" evidence="15">
    <location>
        <begin position="158"/>
        <end position="161"/>
    </location>
</feature>
<feature type="helix" evidence="15">
    <location>
        <begin position="168"/>
        <end position="175"/>
    </location>
</feature>
<feature type="helix" evidence="15">
    <location>
        <begin position="183"/>
        <end position="186"/>
    </location>
</feature>
<feature type="helix" evidence="15">
    <location>
        <begin position="198"/>
        <end position="200"/>
    </location>
</feature>
<feature type="strand" evidence="15">
    <location>
        <begin position="203"/>
        <end position="208"/>
    </location>
</feature>
<feature type="strand" evidence="15">
    <location>
        <begin position="212"/>
        <end position="214"/>
    </location>
</feature>
<feature type="helix" evidence="15">
    <location>
        <begin position="216"/>
        <end position="225"/>
    </location>
</feature>
<feature type="strand" evidence="15">
    <location>
        <begin position="229"/>
        <end position="234"/>
    </location>
</feature>
<feature type="helix" evidence="15">
    <location>
        <begin position="241"/>
        <end position="244"/>
    </location>
</feature>
<feature type="helix" evidence="15">
    <location>
        <begin position="246"/>
        <end position="257"/>
    </location>
</feature>
<sequence>MGGEGGAEPVIHFVFVHGASHGAWCWYKLTTLLDAAGFKSTSVDLTGAGISLIDSNIVFDSDQYNRPLFSLLSDLPPHHKVILVGHSIGGGSVTEALCKFTDKISMAIYLAASMVQPGSIPSPHLSNIHVGEEDIWEYTYGEGTDKPPTGVLMKPEFIRHYYYSQSPLEDVTLSSKLLRPAPMRAFQDLDKLPPNPEAEKVPRVYIKTAKDNLFDSVRQDLLVENWPPSQLYVLEDSDHSAFFSVPTTLFAYLLRAVSFLQR</sequence>
<evidence type="ECO:0000250" key="1">
    <source>
        <dbReference type="UniProtKB" id="Q6RYA0"/>
    </source>
</evidence>
<evidence type="ECO:0000269" key="2">
    <source>
    </source>
</evidence>
<evidence type="ECO:0000269" key="3">
    <source>
    </source>
</evidence>
<evidence type="ECO:0000269" key="4">
    <source>
    </source>
</evidence>
<evidence type="ECO:0000269" key="5">
    <source>
    </source>
</evidence>
<evidence type="ECO:0000269" key="6">
    <source>
    </source>
</evidence>
<evidence type="ECO:0000303" key="7">
    <source>
    </source>
</evidence>
<evidence type="ECO:0000303" key="8">
    <source>
    </source>
</evidence>
<evidence type="ECO:0000303" key="9">
    <source>
    </source>
</evidence>
<evidence type="ECO:0000303" key="10">
    <source>
    </source>
</evidence>
<evidence type="ECO:0000305" key="11"/>
<evidence type="ECO:0000312" key="12">
    <source>
        <dbReference type="Araport" id="AT4G16690"/>
    </source>
</evidence>
<evidence type="ECO:0000312" key="13">
    <source>
        <dbReference type="EMBL" id="CAB10444.1"/>
    </source>
</evidence>
<evidence type="ECO:0000312" key="14">
    <source>
        <dbReference type="EMBL" id="CAB78711.1"/>
    </source>
</evidence>
<evidence type="ECO:0007829" key="15">
    <source>
        <dbReference type="PDB" id="5HK8"/>
    </source>
</evidence>
<dbReference type="EC" id="3.1.1.-" evidence="4"/>
<dbReference type="EMBL" id="Z97341">
    <property type="protein sequence ID" value="CAB10444.1"/>
    <property type="molecule type" value="Genomic_DNA"/>
</dbReference>
<dbReference type="EMBL" id="AL161544">
    <property type="protein sequence ID" value="CAB78711.1"/>
    <property type="molecule type" value="Genomic_DNA"/>
</dbReference>
<dbReference type="EMBL" id="CP002687">
    <property type="protein sequence ID" value="AEE83784.1"/>
    <property type="molecule type" value="Genomic_DNA"/>
</dbReference>
<dbReference type="EMBL" id="AY088316">
    <property type="protein sequence ID" value="AAM65855.1"/>
    <property type="molecule type" value="mRNA"/>
</dbReference>
<dbReference type="EMBL" id="BX828808">
    <property type="status" value="NOT_ANNOTATED_CDS"/>
    <property type="molecule type" value="mRNA"/>
</dbReference>
<dbReference type="PIR" id="B71434">
    <property type="entry name" value="B71434"/>
</dbReference>
<dbReference type="RefSeq" id="NP_193402.1">
    <property type="nucleotide sequence ID" value="NM_117770.5"/>
</dbReference>
<dbReference type="PDB" id="5HK8">
    <property type="method" value="X-ray"/>
    <property type="resolution" value="2.80 A"/>
    <property type="chains" value="A/B/C/D/E/F=1-262"/>
</dbReference>
<dbReference type="PDBsum" id="5HK8"/>
<dbReference type="SMR" id="O23512"/>
<dbReference type="BioGRID" id="12664">
    <property type="interactions" value="1"/>
</dbReference>
<dbReference type="STRING" id="3702.O23512"/>
<dbReference type="ESTHER" id="arath-AT4G16690">
    <property type="family name" value="Hydroxynitrile_lyase"/>
</dbReference>
<dbReference type="iPTMnet" id="O23512"/>
<dbReference type="PaxDb" id="3702-AT4G16690.1"/>
<dbReference type="ProteomicsDB" id="249343"/>
<dbReference type="EnsemblPlants" id="AT4G16690.1">
    <property type="protein sequence ID" value="AT4G16690.1"/>
    <property type="gene ID" value="AT4G16690"/>
</dbReference>
<dbReference type="GeneID" id="827371"/>
<dbReference type="Gramene" id="AT4G16690.1">
    <property type="protein sequence ID" value="AT4G16690.1"/>
    <property type="gene ID" value="AT4G16690"/>
</dbReference>
<dbReference type="KEGG" id="ath:AT4G16690"/>
<dbReference type="Araport" id="AT4G16690"/>
<dbReference type="TAIR" id="AT4G16690">
    <property type="gene designation" value="MES16"/>
</dbReference>
<dbReference type="eggNOG" id="ENOG502QPPA">
    <property type="taxonomic scope" value="Eukaryota"/>
</dbReference>
<dbReference type="HOGENOM" id="CLU_046066_0_2_1"/>
<dbReference type="InParanoid" id="O23512"/>
<dbReference type="OMA" id="VENWPPS"/>
<dbReference type="PhylomeDB" id="O23512"/>
<dbReference type="BioCyc" id="ARA:AT4G16690-MONOMER"/>
<dbReference type="UniPathway" id="UPA00382"/>
<dbReference type="UniPathway" id="UPA00674"/>
<dbReference type="PRO" id="PR:O23512"/>
<dbReference type="Proteomes" id="UP000006548">
    <property type="component" value="Chromosome 4"/>
</dbReference>
<dbReference type="ExpressionAtlas" id="O23512">
    <property type="expression patterns" value="baseline and differential"/>
</dbReference>
<dbReference type="GO" id="GO:0005737">
    <property type="term" value="C:cytoplasm"/>
    <property type="evidence" value="ECO:0007669"/>
    <property type="project" value="UniProtKB-SubCell"/>
</dbReference>
<dbReference type="GO" id="GO:0016788">
    <property type="term" value="F:hydrolase activity, acting on ester bonds"/>
    <property type="evidence" value="ECO:0000314"/>
    <property type="project" value="TAIR"/>
</dbReference>
<dbReference type="GO" id="GO:0080030">
    <property type="term" value="F:methyl indole-3-acetate esterase activity"/>
    <property type="evidence" value="ECO:0000314"/>
    <property type="project" value="TAIR"/>
</dbReference>
<dbReference type="GO" id="GO:0080032">
    <property type="term" value="F:methyl jasmonate esterase activity"/>
    <property type="evidence" value="ECO:0000314"/>
    <property type="project" value="TAIR"/>
</dbReference>
<dbReference type="GO" id="GO:0035560">
    <property type="term" value="F:pheophorbidase activity"/>
    <property type="evidence" value="ECO:0000250"/>
    <property type="project" value="UniProtKB"/>
</dbReference>
<dbReference type="GO" id="GO:0106372">
    <property type="term" value="F:primary fluorescent dioxobilin-type chlorophyll catabolite methylesterase activity"/>
    <property type="evidence" value="ECO:0000314"/>
    <property type="project" value="UniProtKB"/>
</dbReference>
<dbReference type="GO" id="GO:0042803">
    <property type="term" value="F:protein homodimerization activity"/>
    <property type="evidence" value="ECO:0000250"/>
    <property type="project" value="UniProtKB"/>
</dbReference>
<dbReference type="GO" id="GO:0033310">
    <property type="term" value="P:chlorophyll a catabolic process"/>
    <property type="evidence" value="ECO:0000250"/>
    <property type="project" value="UniProtKB"/>
</dbReference>
<dbReference type="GO" id="GO:0015996">
    <property type="term" value="P:chlorophyll catabolic process"/>
    <property type="evidence" value="ECO:0000315"/>
    <property type="project" value="UniProtKB"/>
</dbReference>
<dbReference type="GO" id="GO:0010150">
    <property type="term" value="P:leaf senescence"/>
    <property type="evidence" value="ECO:0000250"/>
    <property type="project" value="UniProtKB"/>
</dbReference>
<dbReference type="GO" id="GO:0031408">
    <property type="term" value="P:oxylipin biosynthetic process"/>
    <property type="evidence" value="ECO:0007669"/>
    <property type="project" value="UniProtKB-UniPathway"/>
</dbReference>
<dbReference type="FunFam" id="3.40.50.1820:FF:000025">
    <property type="entry name" value="putative methylesterase 11, chloroplastic"/>
    <property type="match status" value="1"/>
</dbReference>
<dbReference type="Gene3D" id="3.40.50.1820">
    <property type="entry name" value="alpha/beta hydrolase"/>
    <property type="match status" value="1"/>
</dbReference>
<dbReference type="InterPro" id="IPR000073">
    <property type="entry name" value="AB_hydrolase_1"/>
</dbReference>
<dbReference type="InterPro" id="IPR029058">
    <property type="entry name" value="AB_hydrolase_fold"/>
</dbReference>
<dbReference type="InterPro" id="IPR045889">
    <property type="entry name" value="MES/HNL"/>
</dbReference>
<dbReference type="PANTHER" id="PTHR10992">
    <property type="entry name" value="METHYLESTERASE FAMILY MEMBER"/>
    <property type="match status" value="1"/>
</dbReference>
<dbReference type="PANTHER" id="PTHR10992:SF1026">
    <property type="entry name" value="PFDCC METHYLESTERASE MES16"/>
    <property type="match status" value="1"/>
</dbReference>
<dbReference type="Pfam" id="PF12697">
    <property type="entry name" value="Abhydrolase_6"/>
    <property type="match status" value="1"/>
</dbReference>
<dbReference type="SUPFAM" id="SSF53474">
    <property type="entry name" value="alpha/beta-Hydrolases"/>
    <property type="match status" value="1"/>
</dbReference>
<dbReference type="PROSITE" id="PS00120">
    <property type="entry name" value="LIPASE_SER"/>
    <property type="match status" value="1"/>
</dbReference>
<accession>O23512</accession>
<reference key="1">
    <citation type="journal article" date="1998" name="Nature">
        <title>Analysis of 1.9 Mb of contiguous sequence from chromosome 4 of Arabidopsis thaliana.</title>
        <authorList>
            <person name="Bevan M."/>
            <person name="Bancroft I."/>
            <person name="Bent E."/>
            <person name="Love K."/>
            <person name="Goodman H.M."/>
            <person name="Dean C."/>
            <person name="Bergkamp R."/>
            <person name="Dirkse W."/>
            <person name="van Staveren M."/>
            <person name="Stiekema W."/>
            <person name="Drost L."/>
            <person name="Ridley P."/>
            <person name="Hudson S.-A."/>
            <person name="Patel K."/>
            <person name="Murphy G."/>
            <person name="Piffanelli P."/>
            <person name="Wedler H."/>
            <person name="Wedler E."/>
            <person name="Wambutt R."/>
            <person name="Weitzenegger T."/>
            <person name="Pohl T."/>
            <person name="Terryn N."/>
            <person name="Gielen J."/>
            <person name="Villarroel R."/>
            <person name="De Clercq R."/>
            <person name="van Montagu M."/>
            <person name="Lecharny A."/>
            <person name="Aubourg S."/>
            <person name="Gy I."/>
            <person name="Kreis M."/>
            <person name="Lao N."/>
            <person name="Kavanagh T."/>
            <person name="Hempel S."/>
            <person name="Kotter P."/>
            <person name="Entian K.-D."/>
            <person name="Rieger M."/>
            <person name="Schaefer M."/>
            <person name="Funk B."/>
            <person name="Mueller-Auer S."/>
            <person name="Silvey M."/>
            <person name="James R."/>
            <person name="Monfort A."/>
            <person name="Pons A."/>
            <person name="Puigdomenech P."/>
            <person name="Douka A."/>
            <person name="Voukelatou E."/>
            <person name="Milioni D."/>
            <person name="Hatzopoulos P."/>
            <person name="Piravandi E."/>
            <person name="Obermaier B."/>
            <person name="Hilbert H."/>
            <person name="Duesterhoeft A."/>
            <person name="Moores T."/>
            <person name="Jones J.D.G."/>
            <person name="Eneva T."/>
            <person name="Palme K."/>
            <person name="Benes V."/>
            <person name="Rechmann S."/>
            <person name="Ansorge W."/>
            <person name="Cooke R."/>
            <person name="Berger C."/>
            <person name="Delseny M."/>
            <person name="Voet M."/>
            <person name="Volckaert G."/>
            <person name="Mewes H.-W."/>
            <person name="Klosterman S."/>
            <person name="Schueller C."/>
            <person name="Chalwatzis N."/>
        </authorList>
    </citation>
    <scope>NUCLEOTIDE SEQUENCE [LARGE SCALE GENOMIC DNA]</scope>
    <source>
        <strain>cv. Columbia</strain>
    </source>
</reference>
<reference key="2">
    <citation type="journal article" date="1999" name="Nature">
        <title>Sequence and analysis of chromosome 4 of the plant Arabidopsis thaliana.</title>
        <authorList>
            <person name="Mayer K.F.X."/>
            <person name="Schueller C."/>
            <person name="Wambutt R."/>
            <person name="Murphy G."/>
            <person name="Volckaert G."/>
            <person name="Pohl T."/>
            <person name="Duesterhoeft A."/>
            <person name="Stiekema W."/>
            <person name="Entian K.-D."/>
            <person name="Terryn N."/>
            <person name="Harris B."/>
            <person name="Ansorge W."/>
            <person name="Brandt P."/>
            <person name="Grivell L.A."/>
            <person name="Rieger M."/>
            <person name="Weichselgartner M."/>
            <person name="de Simone V."/>
            <person name="Obermaier B."/>
            <person name="Mache R."/>
            <person name="Mueller M."/>
            <person name="Kreis M."/>
            <person name="Delseny M."/>
            <person name="Puigdomenech P."/>
            <person name="Watson M."/>
            <person name="Schmidtheini T."/>
            <person name="Reichert B."/>
            <person name="Portetelle D."/>
            <person name="Perez-Alonso M."/>
            <person name="Boutry M."/>
            <person name="Bancroft I."/>
            <person name="Vos P."/>
            <person name="Hoheisel J."/>
            <person name="Zimmermann W."/>
            <person name="Wedler H."/>
            <person name="Ridley P."/>
            <person name="Langham S.-A."/>
            <person name="McCullagh B."/>
            <person name="Bilham L."/>
            <person name="Robben J."/>
            <person name="van der Schueren J."/>
            <person name="Grymonprez B."/>
            <person name="Chuang Y.-J."/>
            <person name="Vandenbussche F."/>
            <person name="Braeken M."/>
            <person name="Weltjens I."/>
            <person name="Voet M."/>
            <person name="Bastiaens I."/>
            <person name="Aert R."/>
            <person name="Defoor E."/>
            <person name="Weitzenegger T."/>
            <person name="Bothe G."/>
            <person name="Ramsperger U."/>
            <person name="Hilbert H."/>
            <person name="Braun M."/>
            <person name="Holzer E."/>
            <person name="Brandt A."/>
            <person name="Peters S."/>
            <person name="van Staveren M."/>
            <person name="Dirkse W."/>
            <person name="Mooijman P."/>
            <person name="Klein Lankhorst R."/>
            <person name="Rose M."/>
            <person name="Hauf J."/>
            <person name="Koetter P."/>
            <person name="Berneiser S."/>
            <person name="Hempel S."/>
            <person name="Feldpausch M."/>
            <person name="Lamberth S."/>
            <person name="Van den Daele H."/>
            <person name="De Keyser A."/>
            <person name="Buysshaert C."/>
            <person name="Gielen J."/>
            <person name="Villarroel R."/>
            <person name="De Clercq R."/>
            <person name="van Montagu M."/>
            <person name="Rogers J."/>
            <person name="Cronin A."/>
            <person name="Quail M.A."/>
            <person name="Bray-Allen S."/>
            <person name="Clark L."/>
            <person name="Doggett J."/>
            <person name="Hall S."/>
            <person name="Kay M."/>
            <person name="Lennard N."/>
            <person name="McLay K."/>
            <person name="Mayes R."/>
            <person name="Pettett A."/>
            <person name="Rajandream M.A."/>
            <person name="Lyne M."/>
            <person name="Benes V."/>
            <person name="Rechmann S."/>
            <person name="Borkova D."/>
            <person name="Bloecker H."/>
            <person name="Scharfe M."/>
            <person name="Grimm M."/>
            <person name="Loehnert T.-H."/>
            <person name="Dose S."/>
            <person name="de Haan M."/>
            <person name="Maarse A.C."/>
            <person name="Schaefer M."/>
            <person name="Mueller-Auer S."/>
            <person name="Gabel C."/>
            <person name="Fuchs M."/>
            <person name="Fartmann B."/>
            <person name="Granderath K."/>
            <person name="Dauner D."/>
            <person name="Herzl A."/>
            <person name="Neumann S."/>
            <person name="Argiriou A."/>
            <person name="Vitale D."/>
            <person name="Liguori R."/>
            <person name="Piravandi E."/>
            <person name="Massenet O."/>
            <person name="Quigley F."/>
            <person name="Clabauld G."/>
            <person name="Muendlein A."/>
            <person name="Felber R."/>
            <person name="Schnabl S."/>
            <person name="Hiller R."/>
            <person name="Schmidt W."/>
            <person name="Lecharny A."/>
            <person name="Aubourg S."/>
            <person name="Chefdor F."/>
            <person name="Cooke R."/>
            <person name="Berger C."/>
            <person name="Monfort A."/>
            <person name="Casacuberta E."/>
            <person name="Gibbons T."/>
            <person name="Weber N."/>
            <person name="Vandenbol M."/>
            <person name="Bargues M."/>
            <person name="Terol J."/>
            <person name="Torres A."/>
            <person name="Perez-Perez A."/>
            <person name="Purnelle B."/>
            <person name="Bent E."/>
            <person name="Johnson S."/>
            <person name="Tacon D."/>
            <person name="Jesse T."/>
            <person name="Heijnen L."/>
            <person name="Schwarz S."/>
            <person name="Scholler P."/>
            <person name="Heber S."/>
            <person name="Francs P."/>
            <person name="Bielke C."/>
            <person name="Frishman D."/>
            <person name="Haase D."/>
            <person name="Lemcke K."/>
            <person name="Mewes H.-W."/>
            <person name="Stocker S."/>
            <person name="Zaccaria P."/>
            <person name="Bevan M."/>
            <person name="Wilson R.K."/>
            <person name="de la Bastide M."/>
            <person name="Habermann K."/>
            <person name="Parnell L."/>
            <person name="Dedhia N."/>
            <person name="Gnoj L."/>
            <person name="Schutz K."/>
            <person name="Huang E."/>
            <person name="Spiegel L."/>
            <person name="Sekhon M."/>
            <person name="Murray J."/>
            <person name="Sheet P."/>
            <person name="Cordes M."/>
            <person name="Abu-Threideh J."/>
            <person name="Stoneking T."/>
            <person name="Kalicki J."/>
            <person name="Graves T."/>
            <person name="Harmon G."/>
            <person name="Edwards J."/>
            <person name="Latreille P."/>
            <person name="Courtney L."/>
            <person name="Cloud J."/>
            <person name="Abbott A."/>
            <person name="Scott K."/>
            <person name="Johnson D."/>
            <person name="Minx P."/>
            <person name="Bentley D."/>
            <person name="Fulton B."/>
            <person name="Miller N."/>
            <person name="Greco T."/>
            <person name="Kemp K."/>
            <person name="Kramer J."/>
            <person name="Fulton L."/>
            <person name="Mardis E."/>
            <person name="Dante M."/>
            <person name="Pepin K."/>
            <person name="Hillier L.W."/>
            <person name="Nelson J."/>
            <person name="Spieth J."/>
            <person name="Ryan E."/>
            <person name="Andrews S."/>
            <person name="Geisel C."/>
            <person name="Layman D."/>
            <person name="Du H."/>
            <person name="Ali J."/>
            <person name="Berghoff A."/>
            <person name="Jones K."/>
            <person name="Drone K."/>
            <person name="Cotton M."/>
            <person name="Joshu C."/>
            <person name="Antonoiu B."/>
            <person name="Zidanic M."/>
            <person name="Strong C."/>
            <person name="Sun H."/>
            <person name="Lamar B."/>
            <person name="Yordan C."/>
            <person name="Ma P."/>
            <person name="Zhong J."/>
            <person name="Preston R."/>
            <person name="Vil D."/>
            <person name="Shekher M."/>
            <person name="Matero A."/>
            <person name="Shah R."/>
            <person name="Swaby I.K."/>
            <person name="O'Shaughnessy A."/>
            <person name="Rodriguez M."/>
            <person name="Hoffman J."/>
            <person name="Till S."/>
            <person name="Granat S."/>
            <person name="Shohdy N."/>
            <person name="Hasegawa A."/>
            <person name="Hameed A."/>
            <person name="Lodhi M."/>
            <person name="Johnson A."/>
            <person name="Chen E."/>
            <person name="Marra M.A."/>
            <person name="Martienssen R."/>
            <person name="McCombie W.R."/>
        </authorList>
    </citation>
    <scope>NUCLEOTIDE SEQUENCE [LARGE SCALE GENOMIC DNA]</scope>
    <source>
        <strain>cv. Columbia</strain>
    </source>
</reference>
<reference key="3">
    <citation type="journal article" date="2017" name="Plant J.">
        <title>Araport11: a complete reannotation of the Arabidopsis thaliana reference genome.</title>
        <authorList>
            <person name="Cheng C.Y."/>
            <person name="Krishnakumar V."/>
            <person name="Chan A.P."/>
            <person name="Thibaud-Nissen F."/>
            <person name="Schobel S."/>
            <person name="Town C.D."/>
        </authorList>
    </citation>
    <scope>GENOME REANNOTATION</scope>
    <source>
        <strain>cv. Columbia</strain>
    </source>
</reference>
<reference key="4">
    <citation type="submission" date="2002-03" db="EMBL/GenBank/DDBJ databases">
        <title>Full-length cDNA from Arabidopsis thaliana.</title>
        <authorList>
            <person name="Brover V.V."/>
            <person name="Troukhan M.E."/>
            <person name="Alexandrov N.A."/>
            <person name="Lu Y.-P."/>
            <person name="Flavell R.B."/>
            <person name="Feldmann K.A."/>
        </authorList>
    </citation>
    <scope>NUCLEOTIDE SEQUENCE [LARGE SCALE MRNA]</scope>
</reference>
<reference key="5">
    <citation type="journal article" date="2004" name="Genome Res.">
        <title>Whole genome sequence comparisons and 'full-length' cDNA sequences: a combined approach to evaluate and improve Arabidopsis genome annotation.</title>
        <authorList>
            <person name="Castelli V."/>
            <person name="Aury J.-M."/>
            <person name="Jaillon O."/>
            <person name="Wincker P."/>
            <person name="Clepet C."/>
            <person name="Menard M."/>
            <person name="Cruaud C."/>
            <person name="Quetier F."/>
            <person name="Scarpelli C."/>
            <person name="Schaechter V."/>
            <person name="Temple G."/>
            <person name="Caboche M."/>
            <person name="Weissenbach J."/>
            <person name="Salanoubat M."/>
        </authorList>
    </citation>
    <scope>NUCLEOTIDE SEQUENCE [LARGE SCALE MRNA] OF 6-262</scope>
    <source>
        <strain>cv. Columbia</strain>
    </source>
</reference>
<reference key="6">
    <citation type="journal article" date="2006" name="Plant Physiol.">
        <title>Characterization and cloning of the chlorophyll-degrading enzyme pheophorbidase from cotyledons of radish.</title>
        <authorList>
            <person name="Suzuki Y."/>
            <person name="Amano T."/>
            <person name="Shioi Y."/>
        </authorList>
    </citation>
    <scope>IDENTIFICATION</scope>
</reference>
<reference key="7">
    <citation type="journal article" date="2008" name="Plant Physiol.">
        <title>Inactive methyl indole-3-acetic acid ester can be hydrolyzed and activated by several esterases belonging to the AtMES esterase family of Arabidopsis.</title>
        <authorList>
            <person name="Yang Y."/>
            <person name="Xu R."/>
            <person name="Ma C.J."/>
            <person name="Vlot A.C."/>
            <person name="Klessig D.F."/>
            <person name="Pichersky E."/>
        </authorList>
    </citation>
    <scope>GENE FAMILY</scope>
    <scope>FUNCTION</scope>
    <scope>DISRUPTION PHENOTYPE</scope>
    <scope>CATALYTIC ACTIVITY</scope>
    <scope>PATHWAY</scope>
</reference>
<reference key="8">
    <citation type="journal article" date="2012" name="Plant Physiol.">
        <title>MES16, a member of the methylesterase protein family, specifically demethylates fluorescent chlorophyll catabolites during chlorophyll breakdown in Arabidopsis.</title>
        <authorList>
            <person name="Christ B."/>
            <person name="Schelbert S."/>
            <person name="Aubry S."/>
            <person name="Suessenbacher I."/>
            <person name="Mueller T."/>
            <person name="Kraeutler B."/>
            <person name="Hoertensteiner S."/>
        </authorList>
    </citation>
    <scope>FUNCTION</scope>
    <scope>SUBCELLULAR LOCATION</scope>
    <scope>DISRUPTION PHENOTYPE</scope>
    <scope>PATHWAY</scope>
</reference>
<reference key="9">
    <citation type="journal article" date="2013" name="Plant Cell">
        <title>Cytochrome P450 CYP89A9 is involved in the formation of major chlorophyll catabolites during leaf senescence in Arabidopsis.</title>
        <authorList>
            <person name="Christ B."/>
            <person name="Suessenbacher I."/>
            <person name="Moser S."/>
            <person name="Bichsel N."/>
            <person name="Egert A."/>
            <person name="Mueller T."/>
            <person name="Kraeutler B."/>
            <person name="Hoertensteiner S."/>
        </authorList>
    </citation>
    <scope>FUNCTION</scope>
    <scope>CATALYTIC ACTIVITY</scope>
    <scope>PATHWAY</scope>
    <source>
        <strain>cv. Columbia</strain>
    </source>
</reference>
<reference key="10">
    <citation type="journal article" date="2014" name="Chemistry">
        <title>Hydroxymethylated phyllobilins: a puzzling new feature of the dioxobilin branch of chlorophyll breakdown.</title>
        <authorList>
            <person name="Suessenbacher I."/>
            <person name="Christ B."/>
            <person name="Hoertensteiner S."/>
            <person name="Kraeutler B."/>
        </authorList>
    </citation>
    <scope>FUNCTION</scope>
    <scope>DISRUPTION PHENOTYPE</scope>
    <scope>REVIEW</scope>
</reference>
<reference key="11">
    <citation type="journal article" date="2016" name="Biochem. Biophys. Res. Commun.">
        <title>Crystal structure of methylesterase family member 16 (MES16) from Arabidopsis thaliana.</title>
        <authorList>
            <person name="Li H."/>
            <person name="Pu H."/>
        </authorList>
    </citation>
    <scope>X-RAY CRYSTALLOGRAPHY (2.80 ANGSTROMS)</scope>
    <scope>FUNCTION</scope>
    <scope>MUTAGENESIS OF SER-87</scope>
    <scope>ACTIVE SITE</scope>
</reference>
<organism>
    <name type="scientific">Arabidopsis thaliana</name>
    <name type="common">Mouse-ear cress</name>
    <dbReference type="NCBI Taxonomy" id="3702"/>
    <lineage>
        <taxon>Eukaryota</taxon>
        <taxon>Viridiplantae</taxon>
        <taxon>Streptophyta</taxon>
        <taxon>Embryophyta</taxon>
        <taxon>Tracheophyta</taxon>
        <taxon>Spermatophyta</taxon>
        <taxon>Magnoliopsida</taxon>
        <taxon>eudicotyledons</taxon>
        <taxon>Gunneridae</taxon>
        <taxon>Pentapetalae</taxon>
        <taxon>rosids</taxon>
        <taxon>malvids</taxon>
        <taxon>Brassicales</taxon>
        <taxon>Brassicaceae</taxon>
        <taxon>Camelineae</taxon>
        <taxon>Arabidopsis</taxon>
    </lineage>
</organism>
<proteinExistence type="evidence at protein level"/>
<keyword id="KW-0002">3D-structure</keyword>
<keyword id="KW-0881">Chlorophyll catabolism</keyword>
<keyword id="KW-0963">Cytoplasm</keyword>
<keyword id="KW-0378">Hydrolase</keyword>
<keyword id="KW-1185">Reference proteome</keyword>
<gene>
    <name evidence="8 9 10" type="primary">MES16</name>
    <name evidence="7" type="synonym">PPD</name>
    <name evidence="12" type="ordered locus">At4g16690</name>
    <name evidence="13" type="ORF">dl4370c</name>
    <name evidence="14" type="ORF">FCAALL.12</name>
</gene>